<name>MINE_SYNPW</name>
<keyword id="KW-0131">Cell cycle</keyword>
<keyword id="KW-0132">Cell division</keyword>
<keyword id="KW-1185">Reference proteome</keyword>
<protein>
    <recommendedName>
        <fullName evidence="1">Cell division topological specificity factor</fullName>
    </recommendedName>
</protein>
<reference key="1">
    <citation type="submission" date="2006-05" db="EMBL/GenBank/DDBJ databases">
        <authorList>
            <consortium name="Genoscope"/>
        </authorList>
    </citation>
    <scope>NUCLEOTIDE SEQUENCE [LARGE SCALE GENOMIC DNA]</scope>
    <source>
        <strain>WH7803</strain>
    </source>
</reference>
<feature type="chain" id="PRO_0000298203" description="Cell division topological specificity factor">
    <location>
        <begin position="1"/>
        <end position="93"/>
    </location>
</feature>
<proteinExistence type="inferred from homology"/>
<accession>A5GJ39</accession>
<comment type="function">
    <text evidence="1">Prevents the cell division inhibition by proteins MinC and MinD at internal division sites while permitting inhibition at polar sites. This ensures cell division at the proper site by restricting the formation of a division septum at the midpoint of the long axis of the cell.</text>
</comment>
<comment type="similarity">
    <text evidence="1">Belongs to the MinE family.</text>
</comment>
<evidence type="ECO:0000255" key="1">
    <source>
        <dbReference type="HAMAP-Rule" id="MF_00262"/>
    </source>
</evidence>
<dbReference type="EMBL" id="CT971583">
    <property type="protein sequence ID" value="CAK22954.1"/>
    <property type="molecule type" value="Genomic_DNA"/>
</dbReference>
<dbReference type="SMR" id="A5GJ39"/>
<dbReference type="STRING" id="32051.SynWH7803_0528"/>
<dbReference type="KEGG" id="syx:SynWH7803_0528"/>
<dbReference type="eggNOG" id="COG0851">
    <property type="taxonomic scope" value="Bacteria"/>
</dbReference>
<dbReference type="HOGENOM" id="CLU_137929_1_1_3"/>
<dbReference type="OrthoDB" id="9796578at2"/>
<dbReference type="Proteomes" id="UP000001566">
    <property type="component" value="Chromosome"/>
</dbReference>
<dbReference type="GO" id="GO:0051301">
    <property type="term" value="P:cell division"/>
    <property type="evidence" value="ECO:0007669"/>
    <property type="project" value="UniProtKB-KW"/>
</dbReference>
<dbReference type="GO" id="GO:0032955">
    <property type="term" value="P:regulation of division septum assembly"/>
    <property type="evidence" value="ECO:0007669"/>
    <property type="project" value="InterPro"/>
</dbReference>
<dbReference type="Gene3D" id="3.30.1070.10">
    <property type="entry name" value="Cell division topological specificity factor MinE"/>
    <property type="match status" value="1"/>
</dbReference>
<dbReference type="HAMAP" id="MF_00262">
    <property type="entry name" value="MinE"/>
    <property type="match status" value="1"/>
</dbReference>
<dbReference type="InterPro" id="IPR005527">
    <property type="entry name" value="MinE"/>
</dbReference>
<dbReference type="InterPro" id="IPR036707">
    <property type="entry name" value="MinE_sf"/>
</dbReference>
<dbReference type="NCBIfam" id="TIGR01215">
    <property type="entry name" value="minE"/>
    <property type="match status" value="1"/>
</dbReference>
<dbReference type="NCBIfam" id="NF001422">
    <property type="entry name" value="PRK00296.1"/>
    <property type="match status" value="1"/>
</dbReference>
<dbReference type="Pfam" id="PF03776">
    <property type="entry name" value="MinE"/>
    <property type="match status" value="1"/>
</dbReference>
<dbReference type="SUPFAM" id="SSF55229">
    <property type="entry name" value="Cell division protein MinE topological specificity domain"/>
    <property type="match status" value="1"/>
</dbReference>
<organism>
    <name type="scientific">Synechococcus sp. (strain WH7803)</name>
    <dbReference type="NCBI Taxonomy" id="32051"/>
    <lineage>
        <taxon>Bacteria</taxon>
        <taxon>Bacillati</taxon>
        <taxon>Cyanobacteriota</taxon>
        <taxon>Cyanophyceae</taxon>
        <taxon>Synechococcales</taxon>
        <taxon>Synechococcaceae</taxon>
        <taxon>Synechococcus</taxon>
    </lineage>
</organism>
<sequence length="93" mass="10448">MTLQDLLDRILGRQPASATTARERLQLVLAHDRSDLSPELLDQMRREIFEVVAKYVDIDLEEGDVTLETEDRVTALVANLPIRRSMASSKPGS</sequence>
<gene>
    <name evidence="1" type="primary">minE</name>
    <name type="ordered locus">SynWH7803_0528</name>
</gene>